<comment type="function">
    <text evidence="1 2 3">Catalyzes one of the two ATP producing reactions in the glycolytic pathway via the reversible conversion of 1,3-diphosphoglycerate to 3-phosphoglycerate (By similarity). Both L- and D- forms of purine and pyrimidine nucleotides can be used as substrates, but the activity is much lower on pyrimidines (By similarity). Negatively regulates the biosynthesis of acetyl-CoA from pyruvate in the mitochondrion (By similarity).</text>
</comment>
<comment type="catalytic activity">
    <reaction evidence="3">
        <text>(2R)-3-phosphoglycerate + ATP = (2R)-3-phospho-glyceroyl phosphate + ADP</text>
        <dbReference type="Rhea" id="RHEA:14801"/>
        <dbReference type="ChEBI" id="CHEBI:30616"/>
        <dbReference type="ChEBI" id="CHEBI:57604"/>
        <dbReference type="ChEBI" id="CHEBI:58272"/>
        <dbReference type="ChEBI" id="CHEBI:456216"/>
        <dbReference type="EC" id="2.7.2.3"/>
    </reaction>
</comment>
<comment type="cofactor">
    <cofactor evidence="2">
        <name>Mg(2+)</name>
        <dbReference type="ChEBI" id="CHEBI:18420"/>
    </cofactor>
</comment>
<comment type="pathway">
    <text evidence="3">Carbohydrate degradation; glycolysis; pyruvate from D-glyceraldehyde 3-phosphate: step 2/5.</text>
</comment>
<comment type="subunit">
    <text>Monomer.</text>
</comment>
<comment type="subcellular location">
    <subcellularLocation>
        <location evidence="5">Cytoplasm</location>
    </subcellularLocation>
    <subcellularLocation>
        <location evidence="5">Secreted</location>
        <location evidence="5">Cell wall</location>
    </subcellularLocation>
    <subcellularLocation>
        <location evidence="3">Mitochondrion</location>
    </subcellularLocation>
</comment>
<comment type="similarity">
    <text evidence="6">Belongs to the phosphoglycerate kinase family.</text>
</comment>
<gene>
    <name type="primary">PGK1</name>
    <name type="ordered locus">CAALFM_C600750CA</name>
    <name type="ORF">CaO19.11135</name>
    <name type="ORF">CaO19.3651</name>
</gene>
<dbReference type="EC" id="2.7.2.3" evidence="3"/>
<dbReference type="EMBL" id="U25180">
    <property type="protein sequence ID" value="AAA66523.1"/>
    <property type="molecule type" value="Genomic_DNA"/>
</dbReference>
<dbReference type="EMBL" id="CP017628">
    <property type="protein sequence ID" value="AOW30021.1"/>
    <property type="molecule type" value="Genomic_DNA"/>
</dbReference>
<dbReference type="RefSeq" id="XP_711323.1">
    <property type="nucleotide sequence ID" value="XM_706231.2"/>
</dbReference>
<dbReference type="SMR" id="P46273"/>
<dbReference type="BioGRID" id="1230131">
    <property type="interactions" value="2"/>
</dbReference>
<dbReference type="FunCoup" id="P46273">
    <property type="interactions" value="809"/>
</dbReference>
<dbReference type="STRING" id="237561.P46273"/>
<dbReference type="Allergome" id="5991">
    <property type="allergen name" value="Cand a PGK"/>
</dbReference>
<dbReference type="MoonProt" id="P46273"/>
<dbReference type="EnsemblFungi" id="C6_00750C_A-T">
    <property type="protein sequence ID" value="C6_00750C_A-T-p1"/>
    <property type="gene ID" value="C6_00750C_A"/>
</dbReference>
<dbReference type="GeneID" id="3647081"/>
<dbReference type="KEGG" id="cal:CAALFM_C600750CA"/>
<dbReference type="CGD" id="CAL0000184891">
    <property type="gene designation" value="PGK1"/>
</dbReference>
<dbReference type="VEuPathDB" id="FungiDB:C6_00750C_A"/>
<dbReference type="HOGENOM" id="CLU_025427_0_2_1"/>
<dbReference type="InParanoid" id="P46273"/>
<dbReference type="OMA" id="DMIFDIG"/>
<dbReference type="OrthoDB" id="275353at2759"/>
<dbReference type="BRENDA" id="2.7.2.3">
    <property type="organism ID" value="1096"/>
</dbReference>
<dbReference type="UniPathway" id="UPA00109">
    <property type="reaction ID" value="UER00185"/>
</dbReference>
<dbReference type="PRO" id="PR:P46273"/>
<dbReference type="Proteomes" id="UP000000559">
    <property type="component" value="Chromosome 6"/>
</dbReference>
<dbReference type="GO" id="GO:0009986">
    <property type="term" value="C:cell surface"/>
    <property type="evidence" value="ECO:0000314"/>
    <property type="project" value="CGD"/>
</dbReference>
<dbReference type="GO" id="GO:0005737">
    <property type="term" value="C:cytoplasm"/>
    <property type="evidence" value="ECO:0000314"/>
    <property type="project" value="CGD"/>
</dbReference>
<dbReference type="GO" id="GO:0005829">
    <property type="term" value="C:cytosol"/>
    <property type="evidence" value="ECO:0000318"/>
    <property type="project" value="GO_Central"/>
</dbReference>
<dbReference type="GO" id="GO:0009897">
    <property type="term" value="C:external side of plasma membrane"/>
    <property type="evidence" value="ECO:0000314"/>
    <property type="project" value="CGD"/>
</dbReference>
<dbReference type="GO" id="GO:0005576">
    <property type="term" value="C:extracellular region"/>
    <property type="evidence" value="ECO:0007669"/>
    <property type="project" value="UniProtKB-KW"/>
</dbReference>
<dbReference type="GO" id="GO:0062040">
    <property type="term" value="C:fungal biofilm matrix"/>
    <property type="evidence" value="ECO:0000314"/>
    <property type="project" value="CGD"/>
</dbReference>
<dbReference type="GO" id="GO:0009277">
    <property type="term" value="C:fungal-type cell wall"/>
    <property type="evidence" value="ECO:0000314"/>
    <property type="project" value="CGD"/>
</dbReference>
<dbReference type="GO" id="GO:0030446">
    <property type="term" value="C:hyphal cell wall"/>
    <property type="evidence" value="ECO:0000314"/>
    <property type="project" value="CGD"/>
</dbReference>
<dbReference type="GO" id="GO:0005739">
    <property type="term" value="C:mitochondrion"/>
    <property type="evidence" value="ECO:0007669"/>
    <property type="project" value="UniProtKB-SubCell"/>
</dbReference>
<dbReference type="GO" id="GO:0005886">
    <property type="term" value="C:plasma membrane"/>
    <property type="evidence" value="ECO:0000314"/>
    <property type="project" value="CGD"/>
</dbReference>
<dbReference type="GO" id="GO:0030445">
    <property type="term" value="C:yeast-form cell wall"/>
    <property type="evidence" value="ECO:0000314"/>
    <property type="project" value="CGD"/>
</dbReference>
<dbReference type="GO" id="GO:0043531">
    <property type="term" value="F:ADP binding"/>
    <property type="evidence" value="ECO:0000318"/>
    <property type="project" value="GO_Central"/>
</dbReference>
<dbReference type="GO" id="GO:0005524">
    <property type="term" value="F:ATP binding"/>
    <property type="evidence" value="ECO:0000318"/>
    <property type="project" value="GO_Central"/>
</dbReference>
<dbReference type="GO" id="GO:0046872">
    <property type="term" value="F:metal ion binding"/>
    <property type="evidence" value="ECO:0007669"/>
    <property type="project" value="UniProtKB-KW"/>
</dbReference>
<dbReference type="GO" id="GO:0004618">
    <property type="term" value="F:phosphoglycerate kinase activity"/>
    <property type="evidence" value="ECO:0000318"/>
    <property type="project" value="GO_Central"/>
</dbReference>
<dbReference type="GO" id="GO:0051701">
    <property type="term" value="P:biological process involved in interaction with host"/>
    <property type="evidence" value="ECO:0000353"/>
    <property type="project" value="CGD"/>
</dbReference>
<dbReference type="GO" id="GO:0071555">
    <property type="term" value="P:cell wall organization"/>
    <property type="evidence" value="ECO:0007669"/>
    <property type="project" value="UniProtKB-KW"/>
</dbReference>
<dbReference type="GO" id="GO:0006094">
    <property type="term" value="P:gluconeogenesis"/>
    <property type="evidence" value="ECO:0000318"/>
    <property type="project" value="GO_Central"/>
</dbReference>
<dbReference type="GO" id="GO:0006096">
    <property type="term" value="P:glycolytic process"/>
    <property type="evidence" value="ECO:0000318"/>
    <property type="project" value="GO_Central"/>
</dbReference>
<dbReference type="GO" id="GO:0052553">
    <property type="term" value="P:symbiont-mediated perturbation of host immune response"/>
    <property type="evidence" value="ECO:0000314"/>
    <property type="project" value="CGD"/>
</dbReference>
<dbReference type="CDD" id="cd00318">
    <property type="entry name" value="Phosphoglycerate_kinase"/>
    <property type="match status" value="1"/>
</dbReference>
<dbReference type="FunFam" id="3.40.50.1260:FF:000019">
    <property type="entry name" value="Phosphoglycerate kinase 1"/>
    <property type="match status" value="1"/>
</dbReference>
<dbReference type="FunFam" id="3.40.50.1260:FF:000031">
    <property type="entry name" value="Phosphoglycerate kinase 1"/>
    <property type="match status" value="1"/>
</dbReference>
<dbReference type="Gene3D" id="3.40.50.1260">
    <property type="entry name" value="Phosphoglycerate kinase, N-terminal domain"/>
    <property type="match status" value="3"/>
</dbReference>
<dbReference type="HAMAP" id="MF_00145">
    <property type="entry name" value="Phosphoglyc_kinase"/>
    <property type="match status" value="1"/>
</dbReference>
<dbReference type="InterPro" id="IPR001576">
    <property type="entry name" value="Phosphoglycerate_kinase"/>
</dbReference>
<dbReference type="InterPro" id="IPR015911">
    <property type="entry name" value="Phosphoglycerate_kinase_CS"/>
</dbReference>
<dbReference type="InterPro" id="IPR015824">
    <property type="entry name" value="Phosphoglycerate_kinase_N"/>
</dbReference>
<dbReference type="InterPro" id="IPR036043">
    <property type="entry name" value="Phosphoglycerate_kinase_sf"/>
</dbReference>
<dbReference type="PANTHER" id="PTHR11406">
    <property type="entry name" value="PHOSPHOGLYCERATE KINASE"/>
    <property type="match status" value="1"/>
</dbReference>
<dbReference type="PANTHER" id="PTHR11406:SF0">
    <property type="entry name" value="PHOSPHOGLYCERATE KINASE"/>
    <property type="match status" value="1"/>
</dbReference>
<dbReference type="Pfam" id="PF00162">
    <property type="entry name" value="PGK"/>
    <property type="match status" value="1"/>
</dbReference>
<dbReference type="PIRSF" id="PIRSF000724">
    <property type="entry name" value="Pgk"/>
    <property type="match status" value="1"/>
</dbReference>
<dbReference type="PRINTS" id="PR00477">
    <property type="entry name" value="PHGLYCKINASE"/>
</dbReference>
<dbReference type="SUPFAM" id="SSF53748">
    <property type="entry name" value="Phosphoglycerate kinase"/>
    <property type="match status" value="1"/>
</dbReference>
<dbReference type="PROSITE" id="PS00111">
    <property type="entry name" value="PGLYCERATE_KINASE"/>
    <property type="match status" value="1"/>
</dbReference>
<proteinExistence type="inferred from homology"/>
<feature type="chain" id="PRO_0000145876" description="Phosphoglycerate kinase">
    <location>
        <begin position="1"/>
        <end position="417"/>
    </location>
</feature>
<feature type="binding site" evidence="2">
    <location>
        <position position="23"/>
    </location>
    <ligand>
        <name>(2R)-3-phosphoglycerate</name>
        <dbReference type="ChEBI" id="CHEBI:58272"/>
    </ligand>
</feature>
<feature type="binding site" evidence="4">
    <location>
        <position position="24"/>
    </location>
    <ligand>
        <name>(2R)-3-phosphoglycerate</name>
        <dbReference type="ChEBI" id="CHEBI:58272"/>
    </ligand>
</feature>
<feature type="binding site" evidence="2">
    <location>
        <position position="25"/>
    </location>
    <ligand>
        <name>(2R)-3-phosphoglycerate</name>
        <dbReference type="ChEBI" id="CHEBI:58272"/>
    </ligand>
</feature>
<feature type="binding site" evidence="4">
    <location>
        <position position="26"/>
    </location>
    <ligand>
        <name>(2R)-3-phosphoglycerate</name>
        <dbReference type="ChEBI" id="CHEBI:58272"/>
    </ligand>
</feature>
<feature type="binding site" evidence="2">
    <location>
        <position position="38"/>
    </location>
    <ligand>
        <name>(2R)-3-phosphoglycerate</name>
        <dbReference type="ChEBI" id="CHEBI:58272"/>
    </ligand>
</feature>
<feature type="binding site" evidence="4">
    <location>
        <position position="39"/>
    </location>
    <ligand>
        <name>(2R)-3-phosphoglycerate</name>
        <dbReference type="ChEBI" id="CHEBI:58272"/>
    </ligand>
</feature>
<feature type="binding site" evidence="2">
    <location>
        <position position="62"/>
    </location>
    <ligand>
        <name>(2R)-3-phosphoglycerate</name>
        <dbReference type="ChEBI" id="CHEBI:58272"/>
    </ligand>
</feature>
<feature type="binding site" evidence="4">
    <location>
        <position position="63"/>
    </location>
    <ligand>
        <name>(2R)-3-phosphoglycerate</name>
        <dbReference type="ChEBI" id="CHEBI:58272"/>
    </ligand>
</feature>
<feature type="binding site" evidence="2">
    <location>
        <position position="65"/>
    </location>
    <ligand>
        <name>(2R)-3-phosphoglycerate</name>
        <dbReference type="ChEBI" id="CHEBI:58272"/>
    </ligand>
</feature>
<feature type="binding site" evidence="4">
    <location>
        <position position="66"/>
    </location>
    <ligand>
        <name>(2R)-3-phosphoglycerate</name>
        <dbReference type="ChEBI" id="CHEBI:58272"/>
    </ligand>
</feature>
<feature type="binding site" evidence="2">
    <location>
        <position position="121"/>
    </location>
    <ligand>
        <name>(2R)-3-phosphoglycerate</name>
        <dbReference type="ChEBI" id="CHEBI:58272"/>
    </ligand>
</feature>
<feature type="binding site" evidence="4">
    <location>
        <position position="122"/>
    </location>
    <ligand>
        <name>(2R)-3-phosphoglycerate</name>
        <dbReference type="ChEBI" id="CHEBI:58272"/>
    </ligand>
</feature>
<feature type="binding site" evidence="2">
    <location>
        <position position="169"/>
    </location>
    <ligand>
        <name>(2R)-3-phosphoglycerate</name>
        <dbReference type="ChEBI" id="CHEBI:58272"/>
    </ligand>
</feature>
<feature type="binding site" evidence="4">
    <location>
        <position position="170"/>
    </location>
    <ligand>
        <name>(2R)-3-phosphoglycerate</name>
        <dbReference type="ChEBI" id="CHEBI:58272"/>
    </ligand>
</feature>
<feature type="binding site" evidence="2">
    <location>
        <position position="213"/>
    </location>
    <ligand>
        <name>ADP</name>
        <dbReference type="ChEBI" id="CHEBI:456216"/>
    </ligand>
</feature>
<feature type="binding site" evidence="2">
    <location>
        <position position="213"/>
    </location>
    <ligand>
        <name>CDP</name>
        <dbReference type="ChEBI" id="CHEBI:58069"/>
    </ligand>
</feature>
<feature type="binding site" evidence="4">
    <location>
        <position position="214"/>
    </location>
    <ligand>
        <name>AMP</name>
        <dbReference type="ChEBI" id="CHEBI:456215"/>
    </ligand>
</feature>
<feature type="binding site" evidence="4">
    <location>
        <position position="214"/>
    </location>
    <ligand>
        <name>ATP</name>
        <dbReference type="ChEBI" id="CHEBI:30616"/>
    </ligand>
</feature>
<feature type="binding site" evidence="2">
    <location>
        <position position="214"/>
    </location>
    <ligand>
        <name>Mg(2+)</name>
        <dbReference type="ChEBI" id="CHEBI:18420"/>
    </ligand>
</feature>
<feature type="binding site" evidence="4">
    <location>
        <position position="215"/>
    </location>
    <ligand>
        <name>AMP</name>
        <dbReference type="ChEBI" id="CHEBI:456215"/>
    </ligand>
</feature>
<feature type="binding site" evidence="2">
    <location>
        <position position="218"/>
    </location>
    <ligand>
        <name>CDP</name>
        <dbReference type="ChEBI" id="CHEBI:58069"/>
    </ligand>
</feature>
<feature type="binding site" evidence="2">
    <location>
        <position position="218"/>
    </location>
    <ligand>
        <name>Mg(2+)</name>
        <dbReference type="ChEBI" id="CHEBI:18420"/>
    </ligand>
</feature>
<feature type="binding site" evidence="4">
    <location>
        <position position="219"/>
    </location>
    <ligand>
        <name>AMP</name>
        <dbReference type="ChEBI" id="CHEBI:456215"/>
    </ligand>
</feature>
<feature type="binding site" evidence="4">
    <location>
        <position position="219"/>
    </location>
    <ligand>
        <name>ATP</name>
        <dbReference type="ChEBI" id="CHEBI:30616"/>
    </ligand>
</feature>
<feature type="binding site" evidence="2">
    <location>
        <position position="237"/>
    </location>
    <ligand>
        <name>ADP</name>
        <dbReference type="ChEBI" id="CHEBI:456216"/>
    </ligand>
</feature>
<feature type="binding site" evidence="2">
    <location>
        <position position="237"/>
    </location>
    <ligand>
        <name>CDP</name>
        <dbReference type="ChEBI" id="CHEBI:58069"/>
    </ligand>
</feature>
<feature type="binding site" evidence="4">
    <location>
        <position position="238"/>
    </location>
    <ligand>
        <name>AMP</name>
        <dbReference type="ChEBI" id="CHEBI:456215"/>
    </ligand>
</feature>
<feature type="binding site" evidence="4">
    <location>
        <position position="238"/>
    </location>
    <ligand>
        <name>ATP</name>
        <dbReference type="ChEBI" id="CHEBI:30616"/>
    </ligand>
</feature>
<feature type="binding site" evidence="4">
    <location>
        <position position="312"/>
    </location>
    <ligand>
        <name>AMP</name>
        <dbReference type="ChEBI" id="CHEBI:456215"/>
    </ligand>
</feature>
<feature type="binding site" evidence="4">
    <location>
        <position position="312"/>
    </location>
    <ligand>
        <name>ATP</name>
        <dbReference type="ChEBI" id="CHEBI:30616"/>
    </ligand>
</feature>
<feature type="binding site" evidence="2">
    <location>
        <position position="337"/>
    </location>
    <ligand>
        <name>CDP</name>
        <dbReference type="ChEBI" id="CHEBI:58069"/>
    </ligand>
</feature>
<feature type="binding site" evidence="2">
    <location>
        <position position="342"/>
    </location>
    <ligand>
        <name>ADP</name>
        <dbReference type="ChEBI" id="CHEBI:456216"/>
    </ligand>
</feature>
<feature type="binding site" evidence="2">
    <location>
        <position position="342"/>
    </location>
    <ligand>
        <name>CDP</name>
        <dbReference type="ChEBI" id="CHEBI:58069"/>
    </ligand>
</feature>
<feature type="binding site" evidence="4">
    <location>
        <position position="343"/>
    </location>
    <ligand>
        <name>AMP</name>
        <dbReference type="ChEBI" id="CHEBI:456215"/>
    </ligand>
</feature>
<feature type="binding site" evidence="4">
    <location>
        <position position="343"/>
    </location>
    <ligand>
        <name>ATP</name>
        <dbReference type="ChEBI" id="CHEBI:30616"/>
    </ligand>
</feature>
<feature type="binding site" evidence="4">
    <location>
        <position position="374"/>
    </location>
    <ligand>
        <name>ATP</name>
        <dbReference type="ChEBI" id="CHEBI:30616"/>
    </ligand>
</feature>
<feature type="binding site" evidence="4">
    <location>
        <position position="374"/>
    </location>
    <ligand>
        <name>Mg(2+)</name>
        <dbReference type="ChEBI" id="CHEBI:18420"/>
    </ligand>
</feature>
<feature type="binding site" evidence="4">
    <location>
        <position position="375"/>
    </location>
    <ligand>
        <name>ATP</name>
        <dbReference type="ChEBI" id="CHEBI:30616"/>
    </ligand>
</feature>
<protein>
    <recommendedName>
        <fullName>Phosphoglycerate kinase</fullName>
        <ecNumber evidence="3">2.7.2.3</ecNumber>
    </recommendedName>
</protein>
<accession>P46273</accession>
<accession>A0A1D8PPF5</accession>
<accession>Q59NN7</accession>
<evidence type="ECO:0000250" key="1">
    <source>
        <dbReference type="UniProtKB" id="A0A7G5KET3"/>
    </source>
</evidence>
<evidence type="ECO:0000250" key="2">
    <source>
        <dbReference type="UniProtKB" id="P00558"/>
    </source>
</evidence>
<evidence type="ECO:0000250" key="3">
    <source>
        <dbReference type="UniProtKB" id="P00560"/>
    </source>
</evidence>
<evidence type="ECO:0000250" key="4">
    <source>
        <dbReference type="UniProtKB" id="Q7SIB7"/>
    </source>
</evidence>
<evidence type="ECO:0000269" key="5">
    <source>
    </source>
</evidence>
<evidence type="ECO:0000305" key="6"/>
<reference key="1">
    <citation type="journal article" date="1997" name="Microbiology">
        <title>3-phosphoglycerate kinase: a glycolytic enzyme protein present in the cell wall of Candida albicans.</title>
        <authorList>
            <person name="Alloush H.M."/>
            <person name="Lopez-Ribot J.L."/>
            <person name="Masten B.J."/>
            <person name="Chaffin W.L."/>
        </authorList>
    </citation>
    <scope>NUCLEOTIDE SEQUENCE [GENOMIC DNA]</scope>
    <scope>SUBCELLULAR LOCATION</scope>
    <source>
        <strain>3153A</strain>
    </source>
</reference>
<reference key="2">
    <citation type="journal article" date="2004" name="Proc. Natl. Acad. Sci. U.S.A.">
        <title>The diploid genome sequence of Candida albicans.</title>
        <authorList>
            <person name="Jones T."/>
            <person name="Federspiel N.A."/>
            <person name="Chibana H."/>
            <person name="Dungan J."/>
            <person name="Kalman S."/>
            <person name="Magee B.B."/>
            <person name="Newport G."/>
            <person name="Thorstenson Y.R."/>
            <person name="Agabian N."/>
            <person name="Magee P.T."/>
            <person name="Davis R.W."/>
            <person name="Scherer S."/>
        </authorList>
    </citation>
    <scope>NUCLEOTIDE SEQUENCE [LARGE SCALE GENOMIC DNA]</scope>
    <source>
        <strain>SC5314 / ATCC MYA-2876</strain>
    </source>
</reference>
<reference key="3">
    <citation type="journal article" date="2007" name="Genome Biol.">
        <title>Assembly of the Candida albicans genome into sixteen supercontigs aligned on the eight chromosomes.</title>
        <authorList>
            <person name="van het Hoog M."/>
            <person name="Rast T.J."/>
            <person name="Martchenko M."/>
            <person name="Grindle S."/>
            <person name="Dignard D."/>
            <person name="Hogues H."/>
            <person name="Cuomo C."/>
            <person name="Berriman M."/>
            <person name="Scherer S."/>
            <person name="Magee B.B."/>
            <person name="Whiteway M."/>
            <person name="Chibana H."/>
            <person name="Nantel A."/>
            <person name="Magee P.T."/>
        </authorList>
    </citation>
    <scope>GENOME REANNOTATION</scope>
    <source>
        <strain>SC5314 / ATCC MYA-2876</strain>
    </source>
</reference>
<reference key="4">
    <citation type="journal article" date="2013" name="Genome Biol.">
        <title>Assembly of a phased diploid Candida albicans genome facilitates allele-specific measurements and provides a simple model for repeat and indel structure.</title>
        <authorList>
            <person name="Muzzey D."/>
            <person name="Schwartz K."/>
            <person name="Weissman J.S."/>
            <person name="Sherlock G."/>
        </authorList>
    </citation>
    <scope>NUCLEOTIDE SEQUENCE [LARGE SCALE GENOMIC DNA]</scope>
    <scope>GENOME REANNOTATION</scope>
    <source>
        <strain>SC5314 / ATCC MYA-2876</strain>
    </source>
</reference>
<keyword id="KW-0067">ATP-binding</keyword>
<keyword id="KW-0134">Cell wall</keyword>
<keyword id="KW-0961">Cell wall biogenesis/degradation</keyword>
<keyword id="KW-0963">Cytoplasm</keyword>
<keyword id="KW-0324">Glycolysis</keyword>
<keyword id="KW-0418">Kinase</keyword>
<keyword id="KW-0460">Magnesium</keyword>
<keyword id="KW-0479">Metal-binding</keyword>
<keyword id="KW-0496">Mitochondrion</keyword>
<keyword id="KW-0547">Nucleotide-binding</keyword>
<keyword id="KW-1185">Reference proteome</keyword>
<keyword id="KW-0964">Secreted</keyword>
<keyword id="KW-0808">Transferase</keyword>
<name>PGK_CANAL</name>
<sequence>MSLSNKLSVKDLDVAGKRVFIRVDFNVPLDGKTITNNQRIVAALPTIKYVEEHKPKYIVLASHLGRPNGERNDKYSLAPVATELEKLLGQKVTFLNDCVGPEVTKAVENAKDGEIFLLENLRYHIEEEGSSKDKDGKKVKADPEAVKKFRQELTSLADVYINDAFGTAHRAHSSMVGLEVPQRAAGFLMSKELEYFAKALENPERPFLAILGGAKVSDKIQLIDNLLDKVDMLIVGGGMAFTFKKILNKMPIGDSLFDEAGAKNVEHLVEKAKKNNVELILPVDFVTADKFDKDAKTSSATDAEGIPDNWMGLDCGPKSVELFQQAVAKAKTIVWNGPPGVFEFEKFANGTKSLLDAAVKSAENGNIVIIGGGDTATVAKKYGVVEKLSHVSTGGGASLELLEGKDLPGVVALSNKN</sequence>
<organism>
    <name type="scientific">Candida albicans (strain SC5314 / ATCC MYA-2876)</name>
    <name type="common">Yeast</name>
    <dbReference type="NCBI Taxonomy" id="237561"/>
    <lineage>
        <taxon>Eukaryota</taxon>
        <taxon>Fungi</taxon>
        <taxon>Dikarya</taxon>
        <taxon>Ascomycota</taxon>
        <taxon>Saccharomycotina</taxon>
        <taxon>Pichiomycetes</taxon>
        <taxon>Debaryomycetaceae</taxon>
        <taxon>Candida/Lodderomyces clade</taxon>
        <taxon>Candida</taxon>
    </lineage>
</organism>